<name>AROQ_CLOP1</name>
<sequence length="144" mass="16299">MKIMVINGPNLNLLGIREKEIYGAKDFNQVIDYIKEEGKELGLEVNCFQSNIEGEIINFIHNAYFEKYDGIIINPGAYTHYSIAIYDALKGVEIPTVEVHLSNIHKREEFRHKSVTAPACIGQISGFGEYGYIMAMNALKNKIK</sequence>
<feature type="chain" id="PRO_1000023462" description="3-dehydroquinate dehydratase">
    <location>
        <begin position="1"/>
        <end position="144"/>
    </location>
</feature>
<feature type="active site" description="Proton acceptor" evidence="1">
    <location>
        <position position="22"/>
    </location>
</feature>
<feature type="active site" description="Proton donor" evidence="1">
    <location>
        <position position="100"/>
    </location>
</feature>
<feature type="binding site" evidence="1">
    <location>
        <position position="74"/>
    </location>
    <ligand>
        <name>substrate</name>
    </ligand>
</feature>
<feature type="binding site" evidence="1">
    <location>
        <position position="80"/>
    </location>
    <ligand>
        <name>substrate</name>
    </ligand>
</feature>
<feature type="binding site" evidence="1">
    <location>
        <position position="87"/>
    </location>
    <ligand>
        <name>substrate</name>
    </ligand>
</feature>
<feature type="binding site" evidence="1">
    <location>
        <begin position="101"/>
        <end position="102"/>
    </location>
    <ligand>
        <name>substrate</name>
    </ligand>
</feature>
<feature type="binding site" evidence="1">
    <location>
        <position position="111"/>
    </location>
    <ligand>
        <name>substrate</name>
    </ligand>
</feature>
<feature type="site" description="Transition state stabilizer" evidence="1">
    <location>
        <position position="17"/>
    </location>
</feature>
<keyword id="KW-0028">Amino-acid biosynthesis</keyword>
<keyword id="KW-0057">Aromatic amino acid biosynthesis</keyword>
<keyword id="KW-0456">Lyase</keyword>
<proteinExistence type="inferred from homology"/>
<comment type="function">
    <text evidence="1">Catalyzes a trans-dehydration via an enolate intermediate.</text>
</comment>
<comment type="catalytic activity">
    <reaction evidence="1">
        <text>3-dehydroquinate = 3-dehydroshikimate + H2O</text>
        <dbReference type="Rhea" id="RHEA:21096"/>
        <dbReference type="ChEBI" id="CHEBI:15377"/>
        <dbReference type="ChEBI" id="CHEBI:16630"/>
        <dbReference type="ChEBI" id="CHEBI:32364"/>
        <dbReference type="EC" id="4.2.1.10"/>
    </reaction>
</comment>
<comment type="pathway">
    <text evidence="1">Metabolic intermediate biosynthesis; chorismate biosynthesis; chorismate from D-erythrose 4-phosphate and phosphoenolpyruvate: step 3/7.</text>
</comment>
<comment type="subunit">
    <text evidence="1">Homododecamer.</text>
</comment>
<comment type="similarity">
    <text evidence="1">Belongs to the type-II 3-dehydroquinase family.</text>
</comment>
<dbReference type="EC" id="4.2.1.10" evidence="1"/>
<dbReference type="EMBL" id="CP000246">
    <property type="protein sequence ID" value="ABG84881.1"/>
    <property type="molecule type" value="Genomic_DNA"/>
</dbReference>
<dbReference type="RefSeq" id="WP_011590314.1">
    <property type="nucleotide sequence ID" value="NC_008261.1"/>
</dbReference>
<dbReference type="SMR" id="Q0TT93"/>
<dbReference type="STRING" id="195103.CPF_0695"/>
<dbReference type="PaxDb" id="195103-CPF_0695"/>
<dbReference type="KEGG" id="cpf:CPF_0695"/>
<dbReference type="eggNOG" id="COG0757">
    <property type="taxonomic scope" value="Bacteria"/>
</dbReference>
<dbReference type="HOGENOM" id="CLU_090968_3_0_9"/>
<dbReference type="UniPathway" id="UPA00053">
    <property type="reaction ID" value="UER00086"/>
</dbReference>
<dbReference type="Proteomes" id="UP000001823">
    <property type="component" value="Chromosome"/>
</dbReference>
<dbReference type="GO" id="GO:0003855">
    <property type="term" value="F:3-dehydroquinate dehydratase activity"/>
    <property type="evidence" value="ECO:0007669"/>
    <property type="project" value="UniProtKB-UniRule"/>
</dbReference>
<dbReference type="GO" id="GO:0008652">
    <property type="term" value="P:amino acid biosynthetic process"/>
    <property type="evidence" value="ECO:0007669"/>
    <property type="project" value="UniProtKB-KW"/>
</dbReference>
<dbReference type="GO" id="GO:0009073">
    <property type="term" value="P:aromatic amino acid family biosynthetic process"/>
    <property type="evidence" value="ECO:0007669"/>
    <property type="project" value="UniProtKB-KW"/>
</dbReference>
<dbReference type="GO" id="GO:0009423">
    <property type="term" value="P:chorismate biosynthetic process"/>
    <property type="evidence" value="ECO:0007669"/>
    <property type="project" value="UniProtKB-UniRule"/>
</dbReference>
<dbReference type="GO" id="GO:0019631">
    <property type="term" value="P:quinate catabolic process"/>
    <property type="evidence" value="ECO:0007669"/>
    <property type="project" value="TreeGrafter"/>
</dbReference>
<dbReference type="CDD" id="cd00466">
    <property type="entry name" value="DHQase_II"/>
    <property type="match status" value="1"/>
</dbReference>
<dbReference type="Gene3D" id="3.40.50.9100">
    <property type="entry name" value="Dehydroquinase, class II"/>
    <property type="match status" value="1"/>
</dbReference>
<dbReference type="HAMAP" id="MF_00169">
    <property type="entry name" value="AroQ"/>
    <property type="match status" value="1"/>
</dbReference>
<dbReference type="InterPro" id="IPR001874">
    <property type="entry name" value="DHquinase_II"/>
</dbReference>
<dbReference type="InterPro" id="IPR018509">
    <property type="entry name" value="DHquinase_II_CS"/>
</dbReference>
<dbReference type="InterPro" id="IPR036441">
    <property type="entry name" value="DHquinase_II_sf"/>
</dbReference>
<dbReference type="NCBIfam" id="TIGR01088">
    <property type="entry name" value="aroQ"/>
    <property type="match status" value="1"/>
</dbReference>
<dbReference type="NCBIfam" id="NF003805">
    <property type="entry name" value="PRK05395.1-2"/>
    <property type="match status" value="1"/>
</dbReference>
<dbReference type="NCBIfam" id="NF003806">
    <property type="entry name" value="PRK05395.1-3"/>
    <property type="match status" value="1"/>
</dbReference>
<dbReference type="NCBIfam" id="NF003807">
    <property type="entry name" value="PRK05395.1-4"/>
    <property type="match status" value="1"/>
</dbReference>
<dbReference type="PANTHER" id="PTHR21272">
    <property type="entry name" value="CATABOLIC 3-DEHYDROQUINASE"/>
    <property type="match status" value="1"/>
</dbReference>
<dbReference type="PANTHER" id="PTHR21272:SF3">
    <property type="entry name" value="CATABOLIC 3-DEHYDROQUINASE"/>
    <property type="match status" value="1"/>
</dbReference>
<dbReference type="Pfam" id="PF01220">
    <property type="entry name" value="DHquinase_II"/>
    <property type="match status" value="1"/>
</dbReference>
<dbReference type="PIRSF" id="PIRSF001399">
    <property type="entry name" value="DHquinase_II"/>
    <property type="match status" value="1"/>
</dbReference>
<dbReference type="SUPFAM" id="SSF52304">
    <property type="entry name" value="Type II 3-dehydroquinate dehydratase"/>
    <property type="match status" value="1"/>
</dbReference>
<dbReference type="PROSITE" id="PS01029">
    <property type="entry name" value="DEHYDROQUINASE_II"/>
    <property type="match status" value="1"/>
</dbReference>
<accession>Q0TT93</accession>
<reference key="1">
    <citation type="journal article" date="2006" name="Genome Res.">
        <title>Skewed genomic variability in strains of the toxigenic bacterial pathogen, Clostridium perfringens.</title>
        <authorList>
            <person name="Myers G.S.A."/>
            <person name="Rasko D.A."/>
            <person name="Cheung J.K."/>
            <person name="Ravel J."/>
            <person name="Seshadri R."/>
            <person name="DeBoy R.T."/>
            <person name="Ren Q."/>
            <person name="Varga J."/>
            <person name="Awad M.M."/>
            <person name="Brinkac L.M."/>
            <person name="Daugherty S.C."/>
            <person name="Haft D.H."/>
            <person name="Dodson R.J."/>
            <person name="Madupu R."/>
            <person name="Nelson W.C."/>
            <person name="Rosovitz M.J."/>
            <person name="Sullivan S.A."/>
            <person name="Khouri H."/>
            <person name="Dimitrov G.I."/>
            <person name="Watkins K.L."/>
            <person name="Mulligan S."/>
            <person name="Benton J."/>
            <person name="Radune D."/>
            <person name="Fisher D.J."/>
            <person name="Atkins H.S."/>
            <person name="Hiscox T."/>
            <person name="Jost B.H."/>
            <person name="Billington S.J."/>
            <person name="Songer J.G."/>
            <person name="McClane B.A."/>
            <person name="Titball R.W."/>
            <person name="Rood J.I."/>
            <person name="Melville S.B."/>
            <person name="Paulsen I.T."/>
        </authorList>
    </citation>
    <scope>NUCLEOTIDE SEQUENCE [LARGE SCALE GENOMIC DNA]</scope>
    <source>
        <strain>ATCC 13124 / DSM 756 / JCM 1290 / NCIMB 6125 / NCTC 8237 / S 107 / Type A</strain>
    </source>
</reference>
<protein>
    <recommendedName>
        <fullName evidence="1">3-dehydroquinate dehydratase</fullName>
        <shortName evidence="1">3-dehydroquinase</shortName>
        <ecNumber evidence="1">4.2.1.10</ecNumber>
    </recommendedName>
    <alternativeName>
        <fullName evidence="1">Type II DHQase</fullName>
    </alternativeName>
</protein>
<organism>
    <name type="scientific">Clostridium perfringens (strain ATCC 13124 / DSM 756 / JCM 1290 / NCIMB 6125 / NCTC 8237 / Type A)</name>
    <dbReference type="NCBI Taxonomy" id="195103"/>
    <lineage>
        <taxon>Bacteria</taxon>
        <taxon>Bacillati</taxon>
        <taxon>Bacillota</taxon>
        <taxon>Clostridia</taxon>
        <taxon>Eubacteriales</taxon>
        <taxon>Clostridiaceae</taxon>
        <taxon>Clostridium</taxon>
    </lineage>
</organism>
<gene>
    <name evidence="1" type="primary">aroQ</name>
    <name type="ordered locus">CPF_0695</name>
</gene>
<evidence type="ECO:0000255" key="1">
    <source>
        <dbReference type="HAMAP-Rule" id="MF_00169"/>
    </source>
</evidence>